<gene>
    <name type="ORF">B0353.1</name>
</gene>
<keyword id="KW-1185">Reference proteome</keyword>
<reference key="1">
    <citation type="journal article" date="1998" name="Science">
        <title>Genome sequence of the nematode C. elegans: a platform for investigating biology.</title>
        <authorList>
            <consortium name="The C. elegans sequencing consortium"/>
        </authorList>
    </citation>
    <scope>NUCLEOTIDE SEQUENCE [LARGE SCALE GENOMIC DNA]</scope>
    <source>
        <strain>Bristol N2</strain>
    </source>
</reference>
<proteinExistence type="predicted"/>
<accession>Q10958</accession>
<protein>
    <recommendedName>
        <fullName>Uncharacterized protein B0353.1</fullName>
    </recommendedName>
</protein>
<sequence length="182" mass="19555">MMSGVPPLKPSRSFLPQDSGPMLHRSPSGAKRKIRQKREEASRPSPFLSPSSSSSQTSISPTPTETSSNYRSLVDSGDYQSILPDFDPSFVPVPTPRLSVPFSASMSTLELSSSTLSSPVTAPAPPPPPTSKPTVEVHPMPTDERSPSMASSLNGSIDIDIYKPKPPVPIKPKGLRIDHLNR</sequence>
<dbReference type="EMBL" id="FO080182">
    <property type="protein sequence ID" value="CCD61806.1"/>
    <property type="molecule type" value="Genomic_DNA"/>
</dbReference>
<dbReference type="PIR" id="T15349">
    <property type="entry name" value="T15349"/>
</dbReference>
<dbReference type="RefSeq" id="NP_497210.1">
    <property type="nucleotide sequence ID" value="NM_064809.3"/>
</dbReference>
<dbReference type="BioGRID" id="40482">
    <property type="interactions" value="2"/>
</dbReference>
<dbReference type="IntAct" id="Q10958">
    <property type="interactions" value="2"/>
</dbReference>
<dbReference type="STRING" id="6239.B0353.1b.1"/>
<dbReference type="PaxDb" id="6239-B0353.1b"/>
<dbReference type="EnsemblMetazoa" id="B0353.1a.1">
    <property type="protein sequence ID" value="B0353.1a.1"/>
    <property type="gene ID" value="WBGene00015155"/>
</dbReference>
<dbReference type="UCSC" id="B0353.1b">
    <property type="organism name" value="c. elegans"/>
</dbReference>
<dbReference type="AGR" id="WB:WBGene00015155"/>
<dbReference type="WormBase" id="B0353.1a">
    <property type="protein sequence ID" value="CE52037"/>
    <property type="gene ID" value="WBGene00015155"/>
</dbReference>
<dbReference type="eggNOG" id="ENOG502TFYC">
    <property type="taxonomic scope" value="Eukaryota"/>
</dbReference>
<dbReference type="InParanoid" id="Q10958"/>
<dbReference type="PRO" id="PR:Q10958"/>
<dbReference type="Proteomes" id="UP000001940">
    <property type="component" value="Chromosome III"/>
</dbReference>
<dbReference type="Bgee" id="WBGene00015155">
    <property type="expression patterns" value="Expressed in pharyngeal muscle cell (C elegans) and 3 other cell types or tissues"/>
</dbReference>
<dbReference type="ExpressionAtlas" id="Q10958">
    <property type="expression patterns" value="baseline"/>
</dbReference>
<evidence type="ECO:0000256" key="1">
    <source>
        <dbReference type="SAM" id="MobiDB-lite"/>
    </source>
</evidence>
<organism>
    <name type="scientific">Caenorhabditis elegans</name>
    <dbReference type="NCBI Taxonomy" id="6239"/>
    <lineage>
        <taxon>Eukaryota</taxon>
        <taxon>Metazoa</taxon>
        <taxon>Ecdysozoa</taxon>
        <taxon>Nematoda</taxon>
        <taxon>Chromadorea</taxon>
        <taxon>Rhabditida</taxon>
        <taxon>Rhabditina</taxon>
        <taxon>Rhabditomorpha</taxon>
        <taxon>Rhabditoidea</taxon>
        <taxon>Rhabditidae</taxon>
        <taxon>Peloderinae</taxon>
        <taxon>Caenorhabditis</taxon>
    </lineage>
</organism>
<name>YT31_CAEEL</name>
<feature type="chain" id="PRO_0000065073" description="Uncharacterized protein B0353.1">
    <location>
        <begin position="1"/>
        <end position="182"/>
    </location>
</feature>
<feature type="region of interest" description="Disordered" evidence="1">
    <location>
        <begin position="1"/>
        <end position="73"/>
    </location>
</feature>
<feature type="region of interest" description="Disordered" evidence="1">
    <location>
        <begin position="105"/>
        <end position="182"/>
    </location>
</feature>
<feature type="compositionally biased region" description="Low complexity" evidence="1">
    <location>
        <begin position="43"/>
        <end position="68"/>
    </location>
</feature>
<feature type="compositionally biased region" description="Low complexity" evidence="1">
    <location>
        <begin position="105"/>
        <end position="121"/>
    </location>
</feature>
<feature type="compositionally biased region" description="Pro residues" evidence="1">
    <location>
        <begin position="122"/>
        <end position="131"/>
    </location>
</feature>